<name>RS12_RHOJR</name>
<reference key="1">
    <citation type="journal article" date="2006" name="Proc. Natl. Acad. Sci. U.S.A.">
        <title>The complete genome of Rhodococcus sp. RHA1 provides insights into a catabolic powerhouse.</title>
        <authorList>
            <person name="McLeod M.P."/>
            <person name="Warren R.L."/>
            <person name="Hsiao W.W.L."/>
            <person name="Araki N."/>
            <person name="Myhre M."/>
            <person name="Fernandes C."/>
            <person name="Miyazawa D."/>
            <person name="Wong W."/>
            <person name="Lillquist A.L."/>
            <person name="Wang D."/>
            <person name="Dosanjh M."/>
            <person name="Hara H."/>
            <person name="Petrescu A."/>
            <person name="Morin R.D."/>
            <person name="Yang G."/>
            <person name="Stott J.M."/>
            <person name="Schein J.E."/>
            <person name="Shin H."/>
            <person name="Smailus D."/>
            <person name="Siddiqui A.S."/>
            <person name="Marra M.A."/>
            <person name="Jones S.J.M."/>
            <person name="Holt R."/>
            <person name="Brinkman F.S.L."/>
            <person name="Miyauchi K."/>
            <person name="Fukuda M."/>
            <person name="Davies J.E."/>
            <person name="Mohn W.W."/>
            <person name="Eltis L.D."/>
        </authorList>
    </citation>
    <scope>NUCLEOTIDE SEQUENCE [LARGE SCALE GENOMIC DNA]</scope>
    <source>
        <strain>RHA1</strain>
    </source>
</reference>
<feature type="chain" id="PRO_0000263580" description="Small ribosomal subunit protein uS12">
    <location>
        <begin position="1"/>
        <end position="124"/>
    </location>
</feature>
<feature type="region of interest" description="Disordered" evidence="3">
    <location>
        <begin position="1"/>
        <end position="32"/>
    </location>
</feature>
<feature type="region of interest" description="Disordered" evidence="3">
    <location>
        <begin position="104"/>
        <end position="124"/>
    </location>
</feature>
<feature type="compositionally biased region" description="Basic residues" evidence="3">
    <location>
        <begin position="108"/>
        <end position="118"/>
    </location>
</feature>
<feature type="modified residue" description="3-methylthioaspartic acid" evidence="1">
    <location>
        <position position="89"/>
    </location>
</feature>
<comment type="function">
    <text evidence="2">With S4 and S5 plays an important role in translational accuracy.</text>
</comment>
<comment type="function">
    <text evidence="2">Interacts with and stabilizes bases of the 16S rRNA that are involved in tRNA selection in the A site and with the mRNA backbone. Located at the interface of the 30S and 50S subunits, it traverses the body of the 30S subunit contacting proteins on the other side and probably holding the rRNA structure together. The combined cluster of proteins S8, S12 and S17 appears to hold together the shoulder and platform of the 30S subunit.</text>
</comment>
<comment type="subunit">
    <text evidence="2">Part of the 30S ribosomal subunit. Contacts proteins S8 and S17. May interact with IF1 in the 30S initiation complex.</text>
</comment>
<comment type="similarity">
    <text evidence="2">Belongs to the universal ribosomal protein uS12 family.</text>
</comment>
<organism>
    <name type="scientific">Rhodococcus jostii (strain RHA1)</name>
    <dbReference type="NCBI Taxonomy" id="101510"/>
    <lineage>
        <taxon>Bacteria</taxon>
        <taxon>Bacillati</taxon>
        <taxon>Actinomycetota</taxon>
        <taxon>Actinomycetes</taxon>
        <taxon>Mycobacteriales</taxon>
        <taxon>Nocardiaceae</taxon>
        <taxon>Rhodococcus</taxon>
    </lineage>
</organism>
<sequence length="124" mass="13767">MPTINQLVRKGRRDKTAKVKTAALKGSPQRRGVCTRVYTTTPKKPNSALRKVARVRLTSSVEVTAYIPGEGHNLQEHSMVLVRGGRVKDLPGVRYKIIRGSLDTQGVKGRKQARSRYGAKKEKS</sequence>
<keyword id="KW-0488">Methylation</keyword>
<keyword id="KW-0687">Ribonucleoprotein</keyword>
<keyword id="KW-0689">Ribosomal protein</keyword>
<keyword id="KW-0694">RNA-binding</keyword>
<keyword id="KW-0699">rRNA-binding</keyword>
<keyword id="KW-0820">tRNA-binding</keyword>
<evidence type="ECO:0000250" key="1"/>
<evidence type="ECO:0000255" key="2">
    <source>
        <dbReference type="HAMAP-Rule" id="MF_00403"/>
    </source>
</evidence>
<evidence type="ECO:0000256" key="3">
    <source>
        <dbReference type="SAM" id="MobiDB-lite"/>
    </source>
</evidence>
<evidence type="ECO:0000305" key="4"/>
<accession>Q0SFF1</accession>
<gene>
    <name evidence="2" type="primary">rpsL</name>
    <name type="ordered locus">RHA1_ro01924</name>
</gene>
<protein>
    <recommendedName>
        <fullName evidence="2">Small ribosomal subunit protein uS12</fullName>
    </recommendedName>
    <alternativeName>
        <fullName evidence="4">30S ribosomal protein S12</fullName>
    </alternativeName>
</protein>
<dbReference type="EMBL" id="CP000431">
    <property type="protein sequence ID" value="ABG93735.1"/>
    <property type="molecule type" value="Genomic_DNA"/>
</dbReference>
<dbReference type="RefSeq" id="WP_005252198.1">
    <property type="nucleotide sequence ID" value="NC_008268.1"/>
</dbReference>
<dbReference type="SMR" id="Q0SFF1"/>
<dbReference type="GeneID" id="69893618"/>
<dbReference type="KEGG" id="rha:RHA1_ro01924"/>
<dbReference type="eggNOG" id="COG0048">
    <property type="taxonomic scope" value="Bacteria"/>
</dbReference>
<dbReference type="HOGENOM" id="CLU_104295_1_2_11"/>
<dbReference type="OrthoDB" id="9802366at2"/>
<dbReference type="Proteomes" id="UP000008710">
    <property type="component" value="Chromosome"/>
</dbReference>
<dbReference type="GO" id="GO:0015935">
    <property type="term" value="C:small ribosomal subunit"/>
    <property type="evidence" value="ECO:0007669"/>
    <property type="project" value="InterPro"/>
</dbReference>
<dbReference type="GO" id="GO:0019843">
    <property type="term" value="F:rRNA binding"/>
    <property type="evidence" value="ECO:0007669"/>
    <property type="project" value="UniProtKB-UniRule"/>
</dbReference>
<dbReference type="GO" id="GO:0003735">
    <property type="term" value="F:structural constituent of ribosome"/>
    <property type="evidence" value="ECO:0007669"/>
    <property type="project" value="InterPro"/>
</dbReference>
<dbReference type="GO" id="GO:0000049">
    <property type="term" value="F:tRNA binding"/>
    <property type="evidence" value="ECO:0007669"/>
    <property type="project" value="UniProtKB-UniRule"/>
</dbReference>
<dbReference type="GO" id="GO:0006412">
    <property type="term" value="P:translation"/>
    <property type="evidence" value="ECO:0007669"/>
    <property type="project" value="UniProtKB-UniRule"/>
</dbReference>
<dbReference type="CDD" id="cd03368">
    <property type="entry name" value="Ribosomal_S12"/>
    <property type="match status" value="1"/>
</dbReference>
<dbReference type="FunFam" id="2.40.50.140:FF:000001">
    <property type="entry name" value="30S ribosomal protein S12"/>
    <property type="match status" value="1"/>
</dbReference>
<dbReference type="Gene3D" id="2.40.50.140">
    <property type="entry name" value="Nucleic acid-binding proteins"/>
    <property type="match status" value="1"/>
</dbReference>
<dbReference type="HAMAP" id="MF_00403_B">
    <property type="entry name" value="Ribosomal_uS12_B"/>
    <property type="match status" value="1"/>
</dbReference>
<dbReference type="InterPro" id="IPR012340">
    <property type="entry name" value="NA-bd_OB-fold"/>
</dbReference>
<dbReference type="InterPro" id="IPR006032">
    <property type="entry name" value="Ribosomal_uS12"/>
</dbReference>
<dbReference type="InterPro" id="IPR005679">
    <property type="entry name" value="Ribosomal_uS12_bac"/>
</dbReference>
<dbReference type="NCBIfam" id="TIGR00981">
    <property type="entry name" value="rpsL_bact"/>
    <property type="match status" value="1"/>
</dbReference>
<dbReference type="PANTHER" id="PTHR11652">
    <property type="entry name" value="30S RIBOSOMAL PROTEIN S12 FAMILY MEMBER"/>
    <property type="match status" value="1"/>
</dbReference>
<dbReference type="Pfam" id="PF00164">
    <property type="entry name" value="Ribosom_S12_S23"/>
    <property type="match status" value="1"/>
</dbReference>
<dbReference type="PIRSF" id="PIRSF002133">
    <property type="entry name" value="Ribosomal_S12/S23"/>
    <property type="match status" value="1"/>
</dbReference>
<dbReference type="PRINTS" id="PR01034">
    <property type="entry name" value="RIBOSOMALS12"/>
</dbReference>
<dbReference type="SUPFAM" id="SSF50249">
    <property type="entry name" value="Nucleic acid-binding proteins"/>
    <property type="match status" value="1"/>
</dbReference>
<dbReference type="PROSITE" id="PS00055">
    <property type="entry name" value="RIBOSOMAL_S12"/>
    <property type="match status" value="1"/>
</dbReference>
<proteinExistence type="inferred from homology"/>